<sequence length="1488" mass="170099">MIERGKFRSLTLINWNGFFARTFDLDELVTTLSGGNGAGKSTTMAAFVTALIPDLTLLHFRNTTEAGATSGSRDKGLHGKLKAGVCYSMLDTINSRHQRVVVGVRLQQVAGRDRKVDIKPFAIQGLPMSVQPTQLVTETLNERQARVLSLAELKDKLDEMEGVQFKQFNSITDYHSLMFDLGIIARRLRSASDRSKFYRLIEASLYGGISSAITRSLRDYLLPENSGVRKAFQDMEAALRENRLTLEAIRVTQSDRDLFKHLISEATDYVAADYMRHANERRVHLDQALAFRRELYTSRKQLAAEQYKHVDMARELGEHNGAEGSLEADYQAASDHLNLVQTALRQQEKIERYEADLEELQIRLEEQNEVVAEAAEMQDENEARAEAAELEVDELKSQLADYQQALDVQQTRAIQYNQAISALARAKELCHLPDLTPESAAEWLDTFQAKEQEATEKLLSLEQKMSVAQTAHSQFEQAYQLVAAINGPLARSEAWDVARELLRDGVNQRHLAEQVQPLRMRLSELEQRLREQQEAERLLAEFCKRQGKNFDIDELEALHQELEARIASLSDSVSSASEQRMALRQEQEQLQSRIQHLMRRAPVWLAAQNSLNQLSEQCGEEFTSSQEVTEYLQQLLEREREAIVERDEVGARKNAVDEEIERLSQPGGAEDQRLNALAERFGGVLLSEIYDDVSLEDAPYFSALYGPSRHAIVVPDLSQIAEQLEGLTDCPEDLYLIEGDPQSFDDSVFSVDELEKAVVVKIADRQWRYSRFPSLPIFGRAARENRIESLHAEREVLSERFATLSFDVQKTQRLHQAFSRFIGSHLSVAFEDDPEAEIRRLNGRRVELERALATHENDNQQQRLQFEQAKEGVSALNRLLPRLNLLADETLADRVDEIQERLDEAQEAARFVQQYGNQLAKLEPVVSVLQSDPEQFEQLKEDYAWSQQMQRDARQQAFALAEVVERRAHFSYSDSAEMLSGNSDLNEKLRQRLEQAEAERTRAREALRSHAAQLSQYSQVLASLKSSYDTKKELLNDLQRELQDIGVRADSGAEERARQRRDELHAQLSNNRSRRNQLEKALTFCEAEMENLTRKLRKLERDYHEMREQVVTAKAGWCAVMRMVKDNGVERRLHRRELAYLSADELRSMSDKALGALRLAVADNEHLRDVLRLSEDPKRPERKIQFFVAVYQHLRERIRQDIIRTDDPVEAIEQMEIELSRLTEELTSREQKLAISSRSVANIIRKTIQREQNRIRMLNQGLQSVSFGQVNSVRLNVNVRETHATLLDVLSEQQEQHQDLFNSNRLTFSEALAKLYQRLNPQIDMGQRTPQTIGEELLDYRNYLEMEVEVNRGSDGWLRAESGALSTGEAIGTGMSILVMVVQSWEDEARRLRGKDISPCRLLFLDEAARLDARSIATLFELCERLQMQLIIAAPENISPEKGTTYKLVRKVFQNTEHVHVVGLRGFAPQLPETLPGTQTEDTPSEAS</sequence>
<feature type="chain" id="PRO_1000187481" description="Chromosome partition protein MukB">
    <location>
        <begin position="1"/>
        <end position="1488"/>
    </location>
</feature>
<feature type="region of interest" description="Flexible hinge" evidence="1">
    <location>
        <begin position="666"/>
        <end position="783"/>
    </location>
</feature>
<feature type="region of interest" description="Disordered" evidence="2">
    <location>
        <begin position="1049"/>
        <end position="1074"/>
    </location>
</feature>
<feature type="coiled-coil region" evidence="1">
    <location>
        <begin position="326"/>
        <end position="418"/>
    </location>
</feature>
<feature type="coiled-coil region" evidence="1">
    <location>
        <begin position="444"/>
        <end position="472"/>
    </location>
</feature>
<feature type="coiled-coil region" evidence="1">
    <location>
        <begin position="509"/>
        <end position="602"/>
    </location>
</feature>
<feature type="coiled-coil region" evidence="1">
    <location>
        <begin position="835"/>
        <end position="923"/>
    </location>
</feature>
<feature type="coiled-coil region" evidence="1">
    <location>
        <begin position="977"/>
        <end position="1116"/>
    </location>
</feature>
<feature type="coiled-coil region" evidence="1">
    <location>
        <begin position="1209"/>
        <end position="1265"/>
    </location>
</feature>
<feature type="compositionally biased region" description="Basic and acidic residues" evidence="2">
    <location>
        <begin position="1051"/>
        <end position="1065"/>
    </location>
</feature>
<feature type="binding site" evidence="1">
    <location>
        <begin position="34"/>
        <end position="41"/>
    </location>
    <ligand>
        <name>ATP</name>
        <dbReference type="ChEBI" id="CHEBI:30616"/>
    </ligand>
</feature>
<organism>
    <name type="scientific">Salmonella agona (strain SL483)</name>
    <dbReference type="NCBI Taxonomy" id="454166"/>
    <lineage>
        <taxon>Bacteria</taxon>
        <taxon>Pseudomonadati</taxon>
        <taxon>Pseudomonadota</taxon>
        <taxon>Gammaproteobacteria</taxon>
        <taxon>Enterobacterales</taxon>
        <taxon>Enterobacteriaceae</taxon>
        <taxon>Salmonella</taxon>
    </lineage>
</organism>
<evidence type="ECO:0000255" key="1">
    <source>
        <dbReference type="HAMAP-Rule" id="MF_01800"/>
    </source>
</evidence>
<evidence type="ECO:0000256" key="2">
    <source>
        <dbReference type="SAM" id="MobiDB-lite"/>
    </source>
</evidence>
<dbReference type="EMBL" id="CP001138">
    <property type="protein sequence ID" value="ACH52416.1"/>
    <property type="molecule type" value="Genomic_DNA"/>
</dbReference>
<dbReference type="RefSeq" id="WP_000572743.1">
    <property type="nucleotide sequence ID" value="NC_011149.1"/>
</dbReference>
<dbReference type="SMR" id="B5F1S6"/>
<dbReference type="KEGG" id="sea:SeAg_B1000"/>
<dbReference type="HOGENOM" id="CLU_004430_0_0_6"/>
<dbReference type="Proteomes" id="UP000008819">
    <property type="component" value="Chromosome"/>
</dbReference>
<dbReference type="GO" id="GO:0005737">
    <property type="term" value="C:cytoplasm"/>
    <property type="evidence" value="ECO:0007669"/>
    <property type="project" value="UniProtKB-UniRule"/>
</dbReference>
<dbReference type="GO" id="GO:0009295">
    <property type="term" value="C:nucleoid"/>
    <property type="evidence" value="ECO:0007669"/>
    <property type="project" value="UniProtKB-SubCell"/>
</dbReference>
<dbReference type="GO" id="GO:0005524">
    <property type="term" value="F:ATP binding"/>
    <property type="evidence" value="ECO:0007669"/>
    <property type="project" value="UniProtKB-UniRule"/>
</dbReference>
<dbReference type="GO" id="GO:0003677">
    <property type="term" value="F:DNA binding"/>
    <property type="evidence" value="ECO:0007669"/>
    <property type="project" value="UniProtKB-UniRule"/>
</dbReference>
<dbReference type="GO" id="GO:0051301">
    <property type="term" value="P:cell division"/>
    <property type="evidence" value="ECO:0007669"/>
    <property type="project" value="UniProtKB-KW"/>
</dbReference>
<dbReference type="GO" id="GO:0030261">
    <property type="term" value="P:chromosome condensation"/>
    <property type="evidence" value="ECO:0007669"/>
    <property type="project" value="UniProtKB-KW"/>
</dbReference>
<dbReference type="GO" id="GO:0007059">
    <property type="term" value="P:chromosome segregation"/>
    <property type="evidence" value="ECO:0007669"/>
    <property type="project" value="UniProtKB-UniRule"/>
</dbReference>
<dbReference type="GO" id="GO:0006260">
    <property type="term" value="P:DNA replication"/>
    <property type="evidence" value="ECO:0007669"/>
    <property type="project" value="UniProtKB-UniRule"/>
</dbReference>
<dbReference type="FunFam" id="3.30.70.3500:FF:000001">
    <property type="entry name" value="Chromosome partition protein MukB"/>
    <property type="match status" value="1"/>
</dbReference>
<dbReference type="FunFam" id="3.40.1140.10:FF:000001">
    <property type="entry name" value="Chromosome partition protein MukB"/>
    <property type="match status" value="1"/>
</dbReference>
<dbReference type="FunFam" id="3.40.1140.10:FF:000002">
    <property type="entry name" value="Chromosome partition protein MukB"/>
    <property type="match status" value="1"/>
</dbReference>
<dbReference type="Gene3D" id="1.10.287.1490">
    <property type="match status" value="1"/>
</dbReference>
<dbReference type="Gene3D" id="1.20.58.850">
    <property type="match status" value="1"/>
</dbReference>
<dbReference type="Gene3D" id="3.40.1140.10">
    <property type="match status" value="2"/>
</dbReference>
<dbReference type="Gene3D" id="1.20.5.420">
    <property type="entry name" value="Immunoglobulin FC, subunit C"/>
    <property type="match status" value="1"/>
</dbReference>
<dbReference type="Gene3D" id="3.30.70.3500">
    <property type="entry name" value="MukB, hinge domain"/>
    <property type="match status" value="1"/>
</dbReference>
<dbReference type="HAMAP" id="MF_01800">
    <property type="entry name" value="MukB"/>
    <property type="match status" value="1"/>
</dbReference>
<dbReference type="InterPro" id="IPR012090">
    <property type="entry name" value="MukB"/>
</dbReference>
<dbReference type="InterPro" id="IPR050308">
    <property type="entry name" value="MukB/SMC"/>
</dbReference>
<dbReference type="InterPro" id="IPR032520">
    <property type="entry name" value="MukB_hinge"/>
</dbReference>
<dbReference type="InterPro" id="IPR042501">
    <property type="entry name" value="MukB_hinge_sf"/>
</dbReference>
<dbReference type="InterPro" id="IPR007406">
    <property type="entry name" value="MukB_N_dom"/>
</dbReference>
<dbReference type="InterPro" id="IPR027417">
    <property type="entry name" value="P-loop_NTPase"/>
</dbReference>
<dbReference type="NCBIfam" id="NF003422">
    <property type="entry name" value="PRK04863.1"/>
    <property type="match status" value="1"/>
</dbReference>
<dbReference type="PANTHER" id="PTHR42963">
    <property type="entry name" value="CHROMOSOME PARTITION PROTEIN MUKB"/>
    <property type="match status" value="1"/>
</dbReference>
<dbReference type="PANTHER" id="PTHR42963:SF1">
    <property type="entry name" value="DUF4476 DOMAIN-CONTAINING PROTEIN"/>
    <property type="match status" value="1"/>
</dbReference>
<dbReference type="Pfam" id="PF04310">
    <property type="entry name" value="MukB"/>
    <property type="match status" value="1"/>
</dbReference>
<dbReference type="Pfam" id="PF16330">
    <property type="entry name" value="MukB_hinge"/>
    <property type="match status" value="1"/>
</dbReference>
<dbReference type="Pfam" id="PF13558">
    <property type="entry name" value="SbcC_Walker_B"/>
    <property type="match status" value="1"/>
</dbReference>
<dbReference type="PIRSF" id="PIRSF005246">
    <property type="entry name" value="MukB"/>
    <property type="match status" value="1"/>
</dbReference>
<dbReference type="SUPFAM" id="SSF52540">
    <property type="entry name" value="P-loop containing nucleoside triphosphate hydrolases"/>
    <property type="match status" value="2"/>
</dbReference>
<protein>
    <recommendedName>
        <fullName evidence="1">Chromosome partition protein MukB</fullName>
    </recommendedName>
    <alternativeName>
        <fullName evidence="1">Structural maintenance of chromosome-related protein</fullName>
    </alternativeName>
</protein>
<accession>B5F1S6</accession>
<comment type="function">
    <text evidence="1">Plays a central role in chromosome condensation, segregation and cell cycle progression. Functions as a homodimer, which is essential for chromosome partition. Involved in negative DNA supercoiling in vivo, and by this means organize and compact chromosomes. May achieve or facilitate chromosome segregation by condensation DNA from both sides of a centrally located replisome during cell division.</text>
</comment>
<comment type="subunit">
    <text evidence="1">Homodimerization via its hinge domain. Binds to DNA via its C-terminal region. Interacts, and probably forms a ternary complex, with MukE and MukF via its C-terminal region. The complex formation is stimulated by calcium or magnesium. Interacts with tubulin-related protein FtsZ.</text>
</comment>
<comment type="subcellular location">
    <subcellularLocation>
        <location evidence="1">Cytoplasm</location>
        <location evidence="1">Nucleoid</location>
    </subcellularLocation>
    <text evidence="1">Restricted to the nucleoid region.</text>
</comment>
<comment type="domain">
    <text evidence="1">The hinge domain, which separates the large intramolecular coiled coil regions, allows the homodimerization, forming a V-shaped homodimer.</text>
</comment>
<comment type="similarity">
    <text evidence="1">Belongs to the SMC family. MukB subfamily.</text>
</comment>
<reference key="1">
    <citation type="journal article" date="2011" name="J. Bacteriol.">
        <title>Comparative genomics of 28 Salmonella enterica isolates: evidence for CRISPR-mediated adaptive sublineage evolution.</title>
        <authorList>
            <person name="Fricke W.F."/>
            <person name="Mammel M.K."/>
            <person name="McDermott P.F."/>
            <person name="Tartera C."/>
            <person name="White D.G."/>
            <person name="Leclerc J.E."/>
            <person name="Ravel J."/>
            <person name="Cebula T.A."/>
        </authorList>
    </citation>
    <scope>NUCLEOTIDE SEQUENCE [LARGE SCALE GENOMIC DNA]</scope>
    <source>
        <strain>SL483</strain>
    </source>
</reference>
<keyword id="KW-0067">ATP-binding</keyword>
<keyword id="KW-0131">Cell cycle</keyword>
<keyword id="KW-0132">Cell division</keyword>
<keyword id="KW-0159">Chromosome partition</keyword>
<keyword id="KW-0175">Coiled coil</keyword>
<keyword id="KW-0963">Cytoplasm</keyword>
<keyword id="KW-0226">DNA condensation</keyword>
<keyword id="KW-0238">DNA-binding</keyword>
<keyword id="KW-0547">Nucleotide-binding</keyword>
<gene>
    <name evidence="1" type="primary">mukB</name>
    <name type="ordered locus">SeAg_B1000</name>
</gene>
<name>MUKB_SALA4</name>
<proteinExistence type="inferred from homology"/>